<gene>
    <name type="primary">SKI</name>
</gene>
<keyword id="KW-0002">3D-structure</keyword>
<keyword id="KW-0175">Coiled coil</keyword>
<keyword id="KW-0989">Craniosynostosis</keyword>
<keyword id="KW-0225">Disease variant</keyword>
<keyword id="KW-0539">Nucleus</keyword>
<keyword id="KW-0597">Phosphoprotein</keyword>
<keyword id="KW-1267">Proteomics identification</keyword>
<keyword id="KW-0656">Proto-oncogene</keyword>
<keyword id="KW-1185">Reference proteome</keyword>
<keyword id="KW-0677">Repeat</keyword>
<keyword id="KW-0832">Ubl conjugation</keyword>
<organism>
    <name type="scientific">Homo sapiens</name>
    <name type="common">Human</name>
    <dbReference type="NCBI Taxonomy" id="9606"/>
    <lineage>
        <taxon>Eukaryota</taxon>
        <taxon>Metazoa</taxon>
        <taxon>Chordata</taxon>
        <taxon>Craniata</taxon>
        <taxon>Vertebrata</taxon>
        <taxon>Euteleostomi</taxon>
        <taxon>Mammalia</taxon>
        <taxon>Eutheria</taxon>
        <taxon>Euarchontoglires</taxon>
        <taxon>Primates</taxon>
        <taxon>Haplorrhini</taxon>
        <taxon>Catarrhini</taxon>
        <taxon>Hominidae</taxon>
        <taxon>Homo</taxon>
    </lineage>
</organism>
<comment type="function">
    <text evidence="5">May play a role in terminal differentiation of skeletal muscle cells but not in the determination of cells to the myogenic lineage. Functions as a repressor of TGF-beta signaling.</text>
</comment>
<comment type="subunit">
    <text evidence="4 5">Interacts with SMAD2, SMAD3 and SMAD4. Interacts with HIPK2. Part of a complex with HIPK2 and SMAD1/2/3. Interacts with PRDM16 and SMAD3; the interaction with PRDM16 promotes the recruitment SMAD3-HDAC1 complex on the promoter of TGF-beta target genes.</text>
</comment>
<comment type="interaction">
    <interactant intactId="EBI-347281">
        <id>P12755</id>
    </interactant>
    <interactant intactId="EBI-2129206">
        <id>Q6ZSG1</id>
        <label>ARK2C</label>
    </interactant>
    <organismsDiffer>false</organismsDiffer>
    <experiments>2</experiments>
</comment>
<comment type="interaction">
    <interactant intactId="EBI-347281">
        <id>P12755</id>
    </interactant>
    <interactant intactId="EBI-347233">
        <id>O75376</id>
        <label>NCOR1</label>
    </interactant>
    <organismsDiffer>false</organismsDiffer>
    <experiments>4</experiments>
</comment>
<comment type="interaction">
    <interactant intactId="EBI-347281">
        <id>P12755</id>
    </interactant>
    <interactant intactId="EBI-347218">
        <id>Q96ST3</id>
        <label>SIN3A</label>
    </interactant>
    <organismsDiffer>false</organismsDiffer>
    <experiments>3</experiments>
</comment>
<comment type="interaction">
    <interactant intactId="EBI-347281">
        <id>P12755</id>
    </interactant>
    <interactant intactId="EBI-1040141">
        <id>Q15796</id>
        <label>SMAD2</label>
    </interactant>
    <organismsDiffer>false</organismsDiffer>
    <experiments>11</experiments>
</comment>
<comment type="interaction">
    <interactant intactId="EBI-347281">
        <id>P12755</id>
    </interactant>
    <interactant intactId="EBI-347161">
        <id>P84022</id>
        <label>SMAD3</label>
    </interactant>
    <organismsDiffer>false</organismsDiffer>
    <experiments>8</experiments>
</comment>
<comment type="interaction">
    <interactant intactId="EBI-347281">
        <id>P12755</id>
    </interactant>
    <interactant intactId="EBI-347263">
        <id>Q13485</id>
        <label>SMAD4</label>
    </interactant>
    <organismsDiffer>false</organismsDiffer>
    <experiments>15</experiments>
</comment>
<comment type="interaction">
    <interactant intactId="EBI-347281">
        <id>P12755</id>
    </interactant>
    <interactant intactId="EBI-1046864">
        <id>Q9H7D7</id>
        <label>WDR26</label>
    </interactant>
    <organismsDiffer>false</organismsDiffer>
    <experiments>2</experiments>
</comment>
<comment type="interaction">
    <interactant intactId="EBI-347281">
        <id>P12755</id>
    </interactant>
    <interactant intactId="EBI-6503100">
        <id>Q9QUI1</id>
        <label>Fam89b</label>
    </interactant>
    <organismsDiffer>true</organismsDiffer>
    <experiments>6</experiments>
</comment>
<comment type="interaction">
    <interactant intactId="EBI-347281">
        <id>P12755</id>
    </interactant>
    <interactant intactId="EBI-349004">
        <id>Q60974</id>
        <label>Ncor1</label>
    </interactant>
    <organismsDiffer>true</organismsDiffer>
    <experiments>5</experiments>
</comment>
<comment type="interaction">
    <interactant intactId="EBI-347281">
        <id>P12755</id>
    </interactant>
    <interactant intactId="EBI-5737999">
        <id>Q8VI24</id>
        <label>Satb2</label>
    </interactant>
    <organismsDiffer>true</organismsDiffer>
    <experiments>2</experiments>
</comment>
<comment type="subcellular location">
    <subcellularLocation>
        <location>Nucleus</location>
    </subcellularLocation>
</comment>
<comment type="PTM">
    <text evidence="1">Ubiquitinated by ARK2C, promoting proteasomal degradation, leading to enhance the BMP-Smad signaling.</text>
</comment>
<comment type="disease" evidence="6 7 8 9">
    <disease id="DI-01027">
        <name>Shprintzen-Goldberg craniosynostosis syndrome</name>
        <acronym>SGS</acronym>
        <description>A very rare syndrome characterized by a marfanoid habitus, craniosynostosis, characteristic dysmorphic facial features, skeletal and cardiovascular abnormalities, intellectual disability, developmental delay and learning disabilities.</description>
        <dbReference type="MIM" id="182212"/>
    </disease>
    <text>The disease is caused by variants affecting the gene represented in this entry.</text>
</comment>
<comment type="similarity">
    <text evidence="10">Belongs to the SKI family.</text>
</comment>
<accession>P12755</accession>
<accession>Q5SYT7</accession>
<name>SKI_HUMAN</name>
<sequence>MEAAAGGRGCFQPHPGLQKTLEQFHLSSMSSLGGPAAFSARWAQEAYKKESAKEAGAAAVPAPVPAATEPPPVLHLPAIQPPPPVLPGPFFMPSDRSTERCETVLEGETISCFVVGGEKRLCLPQILNSVLRDFSLQQINAVCDELHIYCSRCTADQLEILKVMGILPFSAPSCGLITKTDAERLCNALLYGGAYPPPCKKELAASLALGLELSERSVRVYHECFGKCKGLLVPELYSSPSAACIQCLDCRLMYPPHKFVVHSHKALENRTCHWGFDSANWRAYILLSQDYTGKEEQARLGRCLDDVKEKFDYGNKYKRRVPRVSSEPPASIRPKTDDTSSQSPAPSEKDKPSSWLRTLAGSSNKSLGCVHPRQRLSAFRPWSPAVSASEKELSPHLPALIRDSFYSYKSFETAVAPNVALAPPAQQKVVSSPPCAAAVSRAPEPLATCTQPRKRKLTVDTPGAPETLAPVAAPEEDKDSEAEVEVESREEFTSSLSSLSSPSFTSSSSAKDLGSPGARALPSAVPDAAAPADAPSGLEAELEHLRQALEGGLDTKEAKEKFLHEVVKMRVKQEEKLSAALQAKRSLHQELEFLRVAKKEKLREATEAKRNLRKEIERLRAENEKKMKEANESRLRLKRELEQARQARVCDKGCEAGRLRAKYSAQIEDLQVKLQHAEADREQLRADLLREREAREHLEKVVKELQEQLWPRARPEAAGSEGAAELEP</sequence>
<proteinExistence type="evidence at protein level"/>
<evidence type="ECO:0000250" key="1">
    <source>
        <dbReference type="UniProtKB" id="Q60698"/>
    </source>
</evidence>
<evidence type="ECO:0000255" key="2"/>
<evidence type="ECO:0000256" key="3">
    <source>
        <dbReference type="SAM" id="MobiDB-lite"/>
    </source>
</evidence>
<evidence type="ECO:0000269" key="4">
    <source>
    </source>
</evidence>
<evidence type="ECO:0000269" key="5">
    <source>
    </source>
</evidence>
<evidence type="ECO:0000269" key="6">
    <source>
    </source>
</evidence>
<evidence type="ECO:0000269" key="7">
    <source>
    </source>
</evidence>
<evidence type="ECO:0000269" key="8">
    <source>
    </source>
</evidence>
<evidence type="ECO:0000269" key="9">
    <source>
    </source>
</evidence>
<evidence type="ECO:0000305" key="10"/>
<evidence type="ECO:0007744" key="11">
    <source>
    </source>
</evidence>
<evidence type="ECO:0007744" key="12">
    <source>
    </source>
</evidence>
<evidence type="ECO:0007829" key="13">
    <source>
        <dbReference type="PDB" id="1MR1"/>
    </source>
</evidence>
<evidence type="ECO:0007829" key="14">
    <source>
        <dbReference type="PDB" id="1SBX"/>
    </source>
</evidence>
<evidence type="ECO:0007829" key="15">
    <source>
        <dbReference type="PDB" id="5XOD"/>
    </source>
</evidence>
<evidence type="ECO:0007829" key="16">
    <source>
        <dbReference type="PDB" id="6ZVQ"/>
    </source>
</evidence>
<protein>
    <recommendedName>
        <fullName>Ski oncogene</fullName>
    </recommendedName>
    <alternativeName>
        <fullName>Proto-oncogene c-Ski</fullName>
    </alternativeName>
</protein>
<dbReference type="EMBL" id="X15218">
    <property type="protein sequence ID" value="CAA33288.1"/>
    <property type="molecule type" value="mRNA"/>
</dbReference>
<dbReference type="EMBL" id="AL590822">
    <property type="status" value="NOT_ANNOTATED_CDS"/>
    <property type="molecule type" value="Genomic_DNA"/>
</dbReference>
<dbReference type="CCDS" id="CCDS39.1"/>
<dbReference type="PIR" id="S06053">
    <property type="entry name" value="TVHUSK"/>
</dbReference>
<dbReference type="RefSeq" id="NP_003027.1">
    <property type="nucleotide sequence ID" value="NM_003036.4"/>
</dbReference>
<dbReference type="PDB" id="1MR1">
    <property type="method" value="X-ray"/>
    <property type="resolution" value="2.85 A"/>
    <property type="chains" value="C/D=219-313"/>
</dbReference>
<dbReference type="PDB" id="1SBX">
    <property type="method" value="X-ray"/>
    <property type="resolution" value="1.65 A"/>
    <property type="chains" value="A=91-192"/>
</dbReference>
<dbReference type="PDB" id="5XOD">
    <property type="method" value="X-ray"/>
    <property type="resolution" value="1.85 A"/>
    <property type="chains" value="B=15-40"/>
</dbReference>
<dbReference type="PDB" id="6ZVQ">
    <property type="method" value="X-ray"/>
    <property type="resolution" value="2.03 A"/>
    <property type="chains" value="B=11-45"/>
</dbReference>
<dbReference type="PDBsum" id="1MR1"/>
<dbReference type="PDBsum" id="1SBX"/>
<dbReference type="PDBsum" id="5XOD"/>
<dbReference type="PDBsum" id="6ZVQ"/>
<dbReference type="SMR" id="P12755"/>
<dbReference type="BioGRID" id="112388">
    <property type="interactions" value="176"/>
</dbReference>
<dbReference type="CORUM" id="P12755"/>
<dbReference type="DIP" id="DIP-31514N"/>
<dbReference type="FunCoup" id="P12755">
    <property type="interactions" value="955"/>
</dbReference>
<dbReference type="IntAct" id="P12755">
    <property type="interactions" value="43"/>
</dbReference>
<dbReference type="MINT" id="P12755"/>
<dbReference type="STRING" id="9606.ENSP00000367797"/>
<dbReference type="GlyCosmos" id="P12755">
    <property type="glycosylation" value="3 sites, 2 glycans"/>
</dbReference>
<dbReference type="GlyGen" id="P12755">
    <property type="glycosylation" value="4 sites, 1 N-linked glycan (1 site), 2 O-linked glycans (3 sites)"/>
</dbReference>
<dbReference type="iPTMnet" id="P12755"/>
<dbReference type="PhosphoSitePlus" id="P12755"/>
<dbReference type="SwissPalm" id="P12755"/>
<dbReference type="BioMuta" id="SKI"/>
<dbReference type="DMDM" id="134517"/>
<dbReference type="jPOST" id="P12755"/>
<dbReference type="MassIVE" id="P12755"/>
<dbReference type="PaxDb" id="9606-ENSP00000367797"/>
<dbReference type="PeptideAtlas" id="P12755"/>
<dbReference type="ProteomicsDB" id="52865"/>
<dbReference type="Pumba" id="P12755"/>
<dbReference type="Antibodypedia" id="4180">
    <property type="antibodies" value="199 antibodies from 38 providers"/>
</dbReference>
<dbReference type="DNASU" id="6497"/>
<dbReference type="Ensembl" id="ENST00000378536.5">
    <property type="protein sequence ID" value="ENSP00000367797.4"/>
    <property type="gene ID" value="ENSG00000157933.11"/>
</dbReference>
<dbReference type="GeneID" id="6497"/>
<dbReference type="KEGG" id="hsa:6497"/>
<dbReference type="MANE-Select" id="ENST00000378536.5">
    <property type="protein sequence ID" value="ENSP00000367797.4"/>
    <property type="RefSeq nucleotide sequence ID" value="NM_003036.4"/>
    <property type="RefSeq protein sequence ID" value="NP_003027.1"/>
</dbReference>
<dbReference type="UCSC" id="uc001aja.5">
    <property type="organism name" value="human"/>
</dbReference>
<dbReference type="AGR" id="HGNC:10896"/>
<dbReference type="CTD" id="6497"/>
<dbReference type="DisGeNET" id="6497"/>
<dbReference type="GeneCards" id="SKI"/>
<dbReference type="GeneReviews" id="SKI"/>
<dbReference type="HGNC" id="HGNC:10896">
    <property type="gene designation" value="SKI"/>
</dbReference>
<dbReference type="HPA" id="ENSG00000157933">
    <property type="expression patterns" value="Tissue enhanced (brain)"/>
</dbReference>
<dbReference type="MalaCards" id="SKI"/>
<dbReference type="MIM" id="164780">
    <property type="type" value="gene"/>
</dbReference>
<dbReference type="MIM" id="182212">
    <property type="type" value="phenotype"/>
</dbReference>
<dbReference type="neXtProt" id="NX_P12755"/>
<dbReference type="OpenTargets" id="ENSG00000157933"/>
<dbReference type="Orphanet" id="1606">
    <property type="disease" value="1p36 deletion syndrome"/>
</dbReference>
<dbReference type="Orphanet" id="2462">
    <property type="disease" value="Shprintzen-Goldberg syndrome"/>
</dbReference>
<dbReference type="PharmGKB" id="PA35796"/>
<dbReference type="VEuPathDB" id="HostDB:ENSG00000157933"/>
<dbReference type="eggNOG" id="ENOG502QTF6">
    <property type="taxonomic scope" value="Eukaryota"/>
</dbReference>
<dbReference type="GeneTree" id="ENSGT00940000160546"/>
<dbReference type="HOGENOM" id="CLU_025786_0_0_1"/>
<dbReference type="InParanoid" id="P12755"/>
<dbReference type="OMA" id="LYKRESA"/>
<dbReference type="OrthoDB" id="3938623at2759"/>
<dbReference type="PAN-GO" id="P12755">
    <property type="GO annotations" value="8 GO annotations based on evolutionary models"/>
</dbReference>
<dbReference type="PhylomeDB" id="P12755"/>
<dbReference type="TreeFam" id="TF324133"/>
<dbReference type="PathwayCommons" id="P12755"/>
<dbReference type="Reactome" id="R-HSA-201451">
    <property type="pathway name" value="Signaling by BMP"/>
</dbReference>
<dbReference type="Reactome" id="R-HSA-2173795">
    <property type="pathway name" value="Downregulation of SMAD2/3:SMAD4 transcriptional activity"/>
</dbReference>
<dbReference type="SignaLink" id="P12755"/>
<dbReference type="SIGNOR" id="P12755"/>
<dbReference type="BioGRID-ORCS" id="6497">
    <property type="hits" value="29 hits in 1157 CRISPR screens"/>
</dbReference>
<dbReference type="ChiTaRS" id="SKI">
    <property type="organism name" value="human"/>
</dbReference>
<dbReference type="EvolutionaryTrace" id="P12755"/>
<dbReference type="GeneWiki" id="SKI_protein"/>
<dbReference type="GenomeRNAi" id="6497"/>
<dbReference type="Pharos" id="P12755">
    <property type="development level" value="Tbio"/>
</dbReference>
<dbReference type="PRO" id="PR:P12755"/>
<dbReference type="Proteomes" id="UP000005640">
    <property type="component" value="Chromosome 1"/>
</dbReference>
<dbReference type="RNAct" id="P12755">
    <property type="molecule type" value="protein"/>
</dbReference>
<dbReference type="Bgee" id="ENSG00000157933">
    <property type="expression patterns" value="Expressed in nipple and 187 other cell types or tissues"/>
</dbReference>
<dbReference type="GO" id="GO:0005813">
    <property type="term" value="C:centrosome"/>
    <property type="evidence" value="ECO:0000314"/>
    <property type="project" value="MGI"/>
</dbReference>
<dbReference type="GO" id="GO:0005737">
    <property type="term" value="C:cytoplasm"/>
    <property type="evidence" value="ECO:0000250"/>
    <property type="project" value="BHF-UCL"/>
</dbReference>
<dbReference type="GO" id="GO:0016604">
    <property type="term" value="C:nuclear body"/>
    <property type="evidence" value="ECO:0000314"/>
    <property type="project" value="UniProtKB"/>
</dbReference>
<dbReference type="GO" id="GO:0005654">
    <property type="term" value="C:nucleoplasm"/>
    <property type="evidence" value="ECO:0000314"/>
    <property type="project" value="HPA"/>
</dbReference>
<dbReference type="GO" id="GO:0005634">
    <property type="term" value="C:nucleus"/>
    <property type="evidence" value="ECO:0000314"/>
    <property type="project" value="UniProtKB"/>
</dbReference>
<dbReference type="GO" id="GO:0016605">
    <property type="term" value="C:PML body"/>
    <property type="evidence" value="ECO:0000314"/>
    <property type="project" value="UniProtKB"/>
</dbReference>
<dbReference type="GO" id="GO:0032991">
    <property type="term" value="C:protein-containing complex"/>
    <property type="evidence" value="ECO:0000314"/>
    <property type="project" value="MGI"/>
</dbReference>
<dbReference type="GO" id="GO:0005667">
    <property type="term" value="C:transcription regulator complex"/>
    <property type="evidence" value="ECO:0000250"/>
    <property type="project" value="BHF-UCL"/>
</dbReference>
<dbReference type="GO" id="GO:0017053">
    <property type="term" value="C:transcription repressor complex"/>
    <property type="evidence" value="ECO:0000250"/>
    <property type="project" value="BHF-UCL"/>
</dbReference>
<dbReference type="GO" id="GO:0000981">
    <property type="term" value="F:DNA-binding transcription factor activity, RNA polymerase II-specific"/>
    <property type="evidence" value="ECO:0000318"/>
    <property type="project" value="GO_Central"/>
</dbReference>
<dbReference type="GO" id="GO:0140297">
    <property type="term" value="F:DNA-binding transcription factor binding"/>
    <property type="evidence" value="ECO:0000353"/>
    <property type="project" value="UniProtKB"/>
</dbReference>
<dbReference type="GO" id="GO:0001227">
    <property type="term" value="F:DNA-binding transcription repressor activity, RNA polymerase II-specific"/>
    <property type="evidence" value="ECO:0000314"/>
    <property type="project" value="GO_Central"/>
</dbReference>
<dbReference type="GO" id="GO:0046811">
    <property type="term" value="F:histone deacetylase inhibitor activity"/>
    <property type="evidence" value="ECO:0000250"/>
    <property type="project" value="BHF-UCL"/>
</dbReference>
<dbReference type="GO" id="GO:0042802">
    <property type="term" value="F:identical protein binding"/>
    <property type="evidence" value="ECO:0000353"/>
    <property type="project" value="UniProtKB"/>
</dbReference>
<dbReference type="GO" id="GO:0019904">
    <property type="term" value="F:protein domain specific binding"/>
    <property type="evidence" value="ECO:0000353"/>
    <property type="project" value="UniProtKB"/>
</dbReference>
<dbReference type="GO" id="GO:0019901">
    <property type="term" value="F:protein kinase binding"/>
    <property type="evidence" value="ECO:0000353"/>
    <property type="project" value="UniProtKB"/>
</dbReference>
<dbReference type="GO" id="GO:0000978">
    <property type="term" value="F:RNA polymerase II cis-regulatory region sequence-specific DNA binding"/>
    <property type="evidence" value="ECO:0000318"/>
    <property type="project" value="GO_Central"/>
</dbReference>
<dbReference type="GO" id="GO:0046332">
    <property type="term" value="F:SMAD binding"/>
    <property type="evidence" value="ECO:0000353"/>
    <property type="project" value="UniProtKB"/>
</dbReference>
<dbReference type="GO" id="GO:0031625">
    <property type="term" value="F:ubiquitin protein ligase binding"/>
    <property type="evidence" value="ECO:0000353"/>
    <property type="project" value="UniProtKB"/>
</dbReference>
<dbReference type="GO" id="GO:0008270">
    <property type="term" value="F:zinc ion binding"/>
    <property type="evidence" value="ECO:0000314"/>
    <property type="project" value="UniProtKB"/>
</dbReference>
<dbReference type="GO" id="GO:0009948">
    <property type="term" value="P:anterior/posterior axis specification"/>
    <property type="evidence" value="ECO:0000250"/>
    <property type="project" value="BHF-UCL"/>
</dbReference>
<dbReference type="GO" id="GO:0060349">
    <property type="term" value="P:bone morphogenesis"/>
    <property type="evidence" value="ECO:0000250"/>
    <property type="project" value="BHF-UCL"/>
</dbReference>
<dbReference type="GO" id="GO:0043010">
    <property type="term" value="P:camera-type eye development"/>
    <property type="evidence" value="ECO:0000250"/>
    <property type="project" value="BHF-UCL"/>
</dbReference>
<dbReference type="GO" id="GO:0048593">
    <property type="term" value="P:camera-type eye morphogenesis"/>
    <property type="evidence" value="ECO:0000250"/>
    <property type="project" value="BHF-UCL"/>
</dbReference>
<dbReference type="GO" id="GO:0060038">
    <property type="term" value="P:cardiac muscle cell proliferation"/>
    <property type="evidence" value="ECO:0007669"/>
    <property type="project" value="Ensembl"/>
</dbReference>
<dbReference type="GO" id="GO:0048870">
    <property type="term" value="P:cell motility"/>
    <property type="evidence" value="ECO:0000303"/>
    <property type="project" value="BHF-UCL"/>
</dbReference>
<dbReference type="GO" id="GO:0030326">
    <property type="term" value="P:embryonic limb morphogenesis"/>
    <property type="evidence" value="ECO:0000250"/>
    <property type="project" value="BHF-UCL"/>
</dbReference>
<dbReference type="GO" id="GO:0060325">
    <property type="term" value="P:face morphogenesis"/>
    <property type="evidence" value="ECO:0000250"/>
    <property type="project" value="BHF-UCL"/>
</dbReference>
<dbReference type="GO" id="GO:0002089">
    <property type="term" value="P:lens morphogenesis in camera-type eye"/>
    <property type="evidence" value="ECO:0000250"/>
    <property type="project" value="BHF-UCL"/>
</dbReference>
<dbReference type="GO" id="GO:0022011">
    <property type="term" value="P:myelination in peripheral nervous system"/>
    <property type="evidence" value="ECO:0000250"/>
    <property type="project" value="BHF-UCL"/>
</dbReference>
<dbReference type="GO" id="GO:0014902">
    <property type="term" value="P:myotube differentiation"/>
    <property type="evidence" value="ECO:0000314"/>
    <property type="project" value="UniProtKB"/>
</dbReference>
<dbReference type="GO" id="GO:0032926">
    <property type="term" value="P:negative regulation of activin receptor signaling pathway"/>
    <property type="evidence" value="ECO:0000314"/>
    <property type="project" value="UniProtKB"/>
</dbReference>
<dbReference type="GO" id="GO:0030514">
    <property type="term" value="P:negative regulation of BMP signaling pathway"/>
    <property type="evidence" value="ECO:0000314"/>
    <property type="project" value="UniProtKB"/>
</dbReference>
<dbReference type="GO" id="GO:0008285">
    <property type="term" value="P:negative regulation of cell population proliferation"/>
    <property type="evidence" value="ECO:0000314"/>
    <property type="project" value="UniProtKB"/>
</dbReference>
<dbReference type="GO" id="GO:0048147">
    <property type="term" value="P:negative regulation of fibroblast proliferation"/>
    <property type="evidence" value="ECO:0000250"/>
    <property type="project" value="BHF-UCL"/>
</dbReference>
<dbReference type="GO" id="GO:0045668">
    <property type="term" value="P:negative regulation of osteoblast differentiation"/>
    <property type="evidence" value="ECO:0000314"/>
    <property type="project" value="UniProtKB"/>
</dbReference>
<dbReference type="GO" id="GO:0010626">
    <property type="term" value="P:negative regulation of Schwann cell proliferation"/>
    <property type="evidence" value="ECO:0000316"/>
    <property type="project" value="MGI"/>
</dbReference>
<dbReference type="GO" id="GO:0060392">
    <property type="term" value="P:negative regulation of SMAD protein signal transduction"/>
    <property type="evidence" value="ECO:0000314"/>
    <property type="project" value="UniProtKB"/>
</dbReference>
<dbReference type="GO" id="GO:0000122">
    <property type="term" value="P:negative regulation of transcription by RNA polymerase II"/>
    <property type="evidence" value="ECO:0000314"/>
    <property type="project" value="UniProtKB"/>
</dbReference>
<dbReference type="GO" id="GO:0030512">
    <property type="term" value="P:negative regulation of transforming growth factor beta receptor signaling pathway"/>
    <property type="evidence" value="ECO:0000314"/>
    <property type="project" value="UniProtKB"/>
</dbReference>
<dbReference type="GO" id="GO:0001843">
    <property type="term" value="P:neural tube closure"/>
    <property type="evidence" value="ECO:0000250"/>
    <property type="project" value="BHF-UCL"/>
</dbReference>
<dbReference type="GO" id="GO:0043585">
    <property type="term" value="P:nose morphogenesis"/>
    <property type="evidence" value="ECO:0000250"/>
    <property type="project" value="BHF-UCL"/>
</dbReference>
<dbReference type="GO" id="GO:0021772">
    <property type="term" value="P:olfactory bulb development"/>
    <property type="evidence" value="ECO:0000250"/>
    <property type="project" value="BHF-UCL"/>
</dbReference>
<dbReference type="GO" id="GO:0043388">
    <property type="term" value="P:positive regulation of DNA binding"/>
    <property type="evidence" value="ECO:0000314"/>
    <property type="project" value="UniProtKB"/>
</dbReference>
<dbReference type="GO" id="GO:0045944">
    <property type="term" value="P:positive regulation of transcription by RNA polymerase II"/>
    <property type="evidence" value="ECO:0000250"/>
    <property type="project" value="BHF-UCL"/>
</dbReference>
<dbReference type="GO" id="GO:0030177">
    <property type="term" value="P:positive regulation of Wnt signaling pathway"/>
    <property type="evidence" value="ECO:0000303"/>
    <property type="project" value="BHF-UCL"/>
</dbReference>
<dbReference type="GO" id="GO:0060041">
    <property type="term" value="P:retina development in camera-type eye"/>
    <property type="evidence" value="ECO:0000250"/>
    <property type="project" value="BHF-UCL"/>
</dbReference>
<dbReference type="GO" id="GO:0060021">
    <property type="term" value="P:roof of mouth development"/>
    <property type="evidence" value="ECO:0000250"/>
    <property type="project" value="BHF-UCL"/>
</dbReference>
<dbReference type="GO" id="GO:0048741">
    <property type="term" value="P:skeletal muscle fiber development"/>
    <property type="evidence" value="ECO:0000250"/>
    <property type="project" value="BHF-UCL"/>
</dbReference>
<dbReference type="GO" id="GO:0035019">
    <property type="term" value="P:somatic stem cell population maintenance"/>
    <property type="evidence" value="ECO:0000250"/>
    <property type="project" value="BHF-UCL"/>
</dbReference>
<dbReference type="GO" id="GO:0007179">
    <property type="term" value="P:transforming growth factor beta receptor signaling pathway"/>
    <property type="evidence" value="ECO:0000303"/>
    <property type="project" value="BHF-UCL"/>
</dbReference>
<dbReference type="CDD" id="cd21083">
    <property type="entry name" value="DHD_Ski"/>
    <property type="match status" value="1"/>
</dbReference>
<dbReference type="FunFam" id="3.10.390.10:FF:000002">
    <property type="entry name" value="Putative ski oncogene"/>
    <property type="match status" value="1"/>
</dbReference>
<dbReference type="FunFam" id="3.10.260.20:FF:000002">
    <property type="entry name" value="SKI-like oncogene a"/>
    <property type="match status" value="1"/>
</dbReference>
<dbReference type="Gene3D" id="3.10.390.10">
    <property type="entry name" value="SAND domain-like"/>
    <property type="match status" value="1"/>
</dbReference>
<dbReference type="Gene3D" id="3.10.260.20">
    <property type="entry name" value="Ski"/>
    <property type="match status" value="1"/>
</dbReference>
<dbReference type="IDEAL" id="IID00131"/>
<dbReference type="InterPro" id="IPR014890">
    <property type="entry name" value="c-SKI_SMAD4-bd_dom"/>
</dbReference>
<dbReference type="InterPro" id="IPR047315">
    <property type="entry name" value="DHD_Ski"/>
</dbReference>
<dbReference type="InterPro" id="IPR009061">
    <property type="entry name" value="DNA-bd_dom_put_sf"/>
</dbReference>
<dbReference type="InterPro" id="IPR010919">
    <property type="entry name" value="SAND-like_dom_sf"/>
</dbReference>
<dbReference type="InterPro" id="IPR003380">
    <property type="entry name" value="SKI/SNO/DAC"/>
</dbReference>
<dbReference type="InterPro" id="IPR037000">
    <property type="entry name" value="Ski_DNA-bd_sf"/>
</dbReference>
<dbReference type="InterPro" id="IPR023216">
    <property type="entry name" value="Tscrpt_reg_SKI_SnoN"/>
</dbReference>
<dbReference type="PANTHER" id="PTHR10005:SF15">
    <property type="entry name" value="SKI ONCOGENE"/>
    <property type="match status" value="1"/>
</dbReference>
<dbReference type="PANTHER" id="PTHR10005">
    <property type="entry name" value="SKI ONCOGENE-RELATED"/>
    <property type="match status" value="1"/>
</dbReference>
<dbReference type="Pfam" id="PF08782">
    <property type="entry name" value="c-SKI_SMAD_bind"/>
    <property type="match status" value="1"/>
</dbReference>
<dbReference type="Pfam" id="PF02437">
    <property type="entry name" value="Ski_Sno_DHD"/>
    <property type="match status" value="1"/>
</dbReference>
<dbReference type="SMART" id="SM01046">
    <property type="entry name" value="c-SKI_SMAD_bind"/>
    <property type="match status" value="1"/>
</dbReference>
<dbReference type="SUPFAM" id="SSF46955">
    <property type="entry name" value="Putative DNA-binding domain"/>
    <property type="match status" value="1"/>
</dbReference>
<dbReference type="SUPFAM" id="SSF63763">
    <property type="entry name" value="SAND domain-like"/>
    <property type="match status" value="1"/>
</dbReference>
<reference key="1">
    <citation type="journal article" date="1989" name="Nucleic Acids Res.">
        <title>Isolation of human cDNA clones of ski and the ski-related gene, sno.</title>
        <authorList>
            <person name="Nomura N."/>
            <person name="Sasamoto S."/>
            <person name="Ishii S."/>
            <person name="Date T."/>
            <person name="Matsui M."/>
            <person name="Ishizaki R."/>
        </authorList>
    </citation>
    <scope>NUCLEOTIDE SEQUENCE [MRNA]</scope>
</reference>
<reference key="2">
    <citation type="journal article" date="2006" name="Nature">
        <title>The DNA sequence and biological annotation of human chromosome 1.</title>
        <authorList>
            <person name="Gregory S.G."/>
            <person name="Barlow K.F."/>
            <person name="McLay K.E."/>
            <person name="Kaul R."/>
            <person name="Swarbreck D."/>
            <person name="Dunham A."/>
            <person name="Scott C.E."/>
            <person name="Howe K.L."/>
            <person name="Woodfine K."/>
            <person name="Spencer C.C.A."/>
            <person name="Jones M.C."/>
            <person name="Gillson C."/>
            <person name="Searle S."/>
            <person name="Zhou Y."/>
            <person name="Kokocinski F."/>
            <person name="McDonald L."/>
            <person name="Evans R."/>
            <person name="Phillips K."/>
            <person name="Atkinson A."/>
            <person name="Cooper R."/>
            <person name="Jones C."/>
            <person name="Hall R.E."/>
            <person name="Andrews T.D."/>
            <person name="Lloyd C."/>
            <person name="Ainscough R."/>
            <person name="Almeida J.P."/>
            <person name="Ambrose K.D."/>
            <person name="Anderson F."/>
            <person name="Andrew R.W."/>
            <person name="Ashwell R.I.S."/>
            <person name="Aubin K."/>
            <person name="Babbage A.K."/>
            <person name="Bagguley C.L."/>
            <person name="Bailey J."/>
            <person name="Beasley H."/>
            <person name="Bethel G."/>
            <person name="Bird C.P."/>
            <person name="Bray-Allen S."/>
            <person name="Brown J.Y."/>
            <person name="Brown A.J."/>
            <person name="Buckley D."/>
            <person name="Burton J."/>
            <person name="Bye J."/>
            <person name="Carder C."/>
            <person name="Chapman J.C."/>
            <person name="Clark S.Y."/>
            <person name="Clarke G."/>
            <person name="Clee C."/>
            <person name="Cobley V."/>
            <person name="Collier R.E."/>
            <person name="Corby N."/>
            <person name="Coville G.J."/>
            <person name="Davies J."/>
            <person name="Deadman R."/>
            <person name="Dunn M."/>
            <person name="Earthrowl M."/>
            <person name="Ellington A.G."/>
            <person name="Errington H."/>
            <person name="Frankish A."/>
            <person name="Frankland J."/>
            <person name="French L."/>
            <person name="Garner P."/>
            <person name="Garnett J."/>
            <person name="Gay L."/>
            <person name="Ghori M.R.J."/>
            <person name="Gibson R."/>
            <person name="Gilby L.M."/>
            <person name="Gillett W."/>
            <person name="Glithero R.J."/>
            <person name="Grafham D.V."/>
            <person name="Griffiths C."/>
            <person name="Griffiths-Jones S."/>
            <person name="Grocock R."/>
            <person name="Hammond S."/>
            <person name="Harrison E.S.I."/>
            <person name="Hart E."/>
            <person name="Haugen E."/>
            <person name="Heath P.D."/>
            <person name="Holmes S."/>
            <person name="Holt K."/>
            <person name="Howden P.J."/>
            <person name="Hunt A.R."/>
            <person name="Hunt S.E."/>
            <person name="Hunter G."/>
            <person name="Isherwood J."/>
            <person name="James R."/>
            <person name="Johnson C."/>
            <person name="Johnson D."/>
            <person name="Joy A."/>
            <person name="Kay M."/>
            <person name="Kershaw J.K."/>
            <person name="Kibukawa M."/>
            <person name="Kimberley A.M."/>
            <person name="King A."/>
            <person name="Knights A.J."/>
            <person name="Lad H."/>
            <person name="Laird G."/>
            <person name="Lawlor S."/>
            <person name="Leongamornlert D.A."/>
            <person name="Lloyd D.M."/>
            <person name="Loveland J."/>
            <person name="Lovell J."/>
            <person name="Lush M.J."/>
            <person name="Lyne R."/>
            <person name="Martin S."/>
            <person name="Mashreghi-Mohammadi M."/>
            <person name="Matthews L."/>
            <person name="Matthews N.S.W."/>
            <person name="McLaren S."/>
            <person name="Milne S."/>
            <person name="Mistry S."/>
            <person name="Moore M.J.F."/>
            <person name="Nickerson T."/>
            <person name="O'Dell C.N."/>
            <person name="Oliver K."/>
            <person name="Palmeiri A."/>
            <person name="Palmer S.A."/>
            <person name="Parker A."/>
            <person name="Patel D."/>
            <person name="Pearce A.V."/>
            <person name="Peck A.I."/>
            <person name="Pelan S."/>
            <person name="Phelps K."/>
            <person name="Phillimore B.J."/>
            <person name="Plumb R."/>
            <person name="Rajan J."/>
            <person name="Raymond C."/>
            <person name="Rouse G."/>
            <person name="Saenphimmachak C."/>
            <person name="Sehra H.K."/>
            <person name="Sheridan E."/>
            <person name="Shownkeen R."/>
            <person name="Sims S."/>
            <person name="Skuce C.D."/>
            <person name="Smith M."/>
            <person name="Steward C."/>
            <person name="Subramanian S."/>
            <person name="Sycamore N."/>
            <person name="Tracey A."/>
            <person name="Tromans A."/>
            <person name="Van Helmond Z."/>
            <person name="Wall M."/>
            <person name="Wallis J.M."/>
            <person name="White S."/>
            <person name="Whitehead S.L."/>
            <person name="Wilkinson J.E."/>
            <person name="Willey D.L."/>
            <person name="Williams H."/>
            <person name="Wilming L."/>
            <person name="Wray P.W."/>
            <person name="Wu Z."/>
            <person name="Coulson A."/>
            <person name="Vaudin M."/>
            <person name="Sulston J.E."/>
            <person name="Durbin R.M."/>
            <person name="Hubbard T."/>
            <person name="Wooster R."/>
            <person name="Dunham I."/>
            <person name="Carter N.P."/>
            <person name="McVean G."/>
            <person name="Ross M.T."/>
            <person name="Harrow J."/>
            <person name="Olson M.V."/>
            <person name="Beck S."/>
            <person name="Rogers J."/>
            <person name="Bentley D.R."/>
        </authorList>
    </citation>
    <scope>NUCLEOTIDE SEQUENCE [LARGE SCALE GENOMIC DNA]</scope>
</reference>
<reference key="3">
    <citation type="journal article" date="2003" name="J. Biol. Chem.">
        <title>Requirement of the co-repressor homeodomain-interacting protein kinase 2 for ski-mediated inhibition of bone morphogenetic protein-induced transcriptional activation.</title>
        <authorList>
            <person name="Harada J."/>
            <person name="Kokura K."/>
            <person name="Kanei-Ishii C."/>
            <person name="Nomura T."/>
            <person name="Khan M.M."/>
            <person name="Kim Y."/>
            <person name="Ishii S."/>
        </authorList>
    </citation>
    <scope>INTERACTION WITH HIPK2; SMAD2; SMAD3 AND SMAD4</scope>
</reference>
<reference key="4">
    <citation type="journal article" date="2009" name="Anal. Chem.">
        <title>Lys-N and trypsin cover complementary parts of the phosphoproteome in a refined SCX-based approach.</title>
        <authorList>
            <person name="Gauci S."/>
            <person name="Helbig A.O."/>
            <person name="Slijper M."/>
            <person name="Krijgsveld J."/>
            <person name="Heck A.J."/>
            <person name="Mohammed S."/>
        </authorList>
    </citation>
    <scope>IDENTIFICATION BY MASS SPECTROMETRY [LARGE SCALE ANALYSIS]</scope>
</reference>
<reference key="5">
    <citation type="journal article" date="2009" name="J. Biol. Chem.">
        <title>SKI and MEL1 cooperate to inhibit transforming growth factor-beta signal in gastric cancer cells.</title>
        <authorList>
            <person name="Takahata M."/>
            <person name="Inoue Y."/>
            <person name="Tsuda H."/>
            <person name="Imoto I."/>
            <person name="Koinuma D."/>
            <person name="Hayashi M."/>
            <person name="Ichikura T."/>
            <person name="Yamori T."/>
            <person name="Nagasaki K."/>
            <person name="Yoshida M."/>
            <person name="Matsuoka M."/>
            <person name="Morishita K."/>
            <person name="Yuki K."/>
            <person name="Hanyu A."/>
            <person name="Miyazawa K."/>
            <person name="Inazawa J."/>
            <person name="Miyazono K."/>
            <person name="Imamura T."/>
        </authorList>
    </citation>
    <scope>FUNCTION</scope>
    <scope>INTERACTION WITH PRDM16 AND SMAD3</scope>
</reference>
<reference key="6">
    <citation type="journal article" date="2009" name="Sci. Signal.">
        <title>Quantitative phosphoproteomic analysis of T cell receptor signaling reveals system-wide modulation of protein-protein interactions.</title>
        <authorList>
            <person name="Mayya V."/>
            <person name="Lundgren D.H."/>
            <person name="Hwang S.-I."/>
            <person name="Rezaul K."/>
            <person name="Wu L."/>
            <person name="Eng J.K."/>
            <person name="Rodionov V."/>
            <person name="Han D.K."/>
        </authorList>
    </citation>
    <scope>PHOSPHORYLATION [LARGE SCALE ANALYSIS] AT SER-480</scope>
    <scope>IDENTIFICATION BY MASS SPECTROMETRY [LARGE SCALE ANALYSIS]</scope>
    <source>
        <tissue>Leukemic T-cell</tissue>
    </source>
</reference>
<reference key="7">
    <citation type="journal article" date="2013" name="J. Proteome Res.">
        <title>Toward a comprehensive characterization of a human cancer cell phosphoproteome.</title>
        <authorList>
            <person name="Zhou H."/>
            <person name="Di Palma S."/>
            <person name="Preisinger C."/>
            <person name="Peng M."/>
            <person name="Polat A.N."/>
            <person name="Heck A.J."/>
            <person name="Mohammed S."/>
        </authorList>
    </citation>
    <scope>PHOSPHORYLATION [LARGE SCALE ANALYSIS] AT SER-383; SER-432 AND SER-720</scope>
    <scope>IDENTIFICATION BY MASS SPECTROMETRY [LARGE SCALE ANALYSIS]</scope>
    <source>
        <tissue>Cervix carcinoma</tissue>
        <tissue>Erythroleukemia</tissue>
    </source>
</reference>
<reference key="8">
    <citation type="journal article" date="2012" name="Am. J. Hum. Genet.">
        <title>In-frame mutations in exon 1 of SKI cause dominant Shprintzen-Goldberg syndrome.</title>
        <authorList>
            <person name="Carmignac V."/>
            <person name="Thevenon J."/>
            <person name="Ades L."/>
            <person name="Callewaert B."/>
            <person name="Julia S."/>
            <person name="Thauvin-Robinet C."/>
            <person name="Gueneau L."/>
            <person name="Courcet J.B."/>
            <person name="Lopez E."/>
            <person name="Holman K."/>
            <person name="Renard M."/>
            <person name="Plauchu H."/>
            <person name="Plessis G."/>
            <person name="De Backer J."/>
            <person name="Child A."/>
            <person name="Arno G."/>
            <person name="Duplomb L."/>
            <person name="Callier P."/>
            <person name="Aral B."/>
            <person name="Vabres P."/>
            <person name="Gigot N."/>
            <person name="Arbustini E."/>
            <person name="Grasso M."/>
            <person name="Robinson P.N."/>
            <person name="Goizet C."/>
            <person name="Baumann C."/>
            <person name="Di Rocco M."/>
            <person name="Sanchez Del Pozo J."/>
            <person name="Huet F."/>
            <person name="Jondeau G."/>
            <person name="Collod-Beroud G."/>
            <person name="Beroud C."/>
            <person name="Amiel J."/>
            <person name="Cormier-Daire V."/>
            <person name="Riviere J.B."/>
            <person name="Boileau C."/>
            <person name="De Paepe A."/>
            <person name="Faivre L."/>
        </authorList>
    </citation>
    <scope>VARIANTS SGS LEU-31; VAL-32; PRO-32; CYS-34; VAL-34; SER-34; GLN-35; SER-35; 94-SER--SER-97 DEL AND 95-ASP--SER-97 DEL</scope>
</reference>
<reference key="9">
    <citation type="journal article" date="2012" name="Nat. Genet.">
        <title>Mutations in the TGF-beta repressor SKI cause Shprintzen-Goldberg syndrome with aortic aneurysm.</title>
        <authorList>
            <person name="Doyle A.J."/>
            <person name="Doyle J.J."/>
            <person name="Bessling S.L."/>
            <person name="Maragh S."/>
            <person name="Lindsay M.E."/>
            <person name="Schepers D."/>
            <person name="Gillis E."/>
            <person name="Mortier G."/>
            <person name="Homfray T."/>
            <person name="Sauls K."/>
            <person name="Norris R.A."/>
            <person name="Huso N.D."/>
            <person name="Leahy D."/>
            <person name="Mohr D.W."/>
            <person name="Caulfield M.J."/>
            <person name="Scott A.F."/>
            <person name="Destree A."/>
            <person name="Hennekam R.C."/>
            <person name="Arn P.H."/>
            <person name="Curry C.J."/>
            <person name="Van Laer L."/>
            <person name="McCallion A.S."/>
            <person name="Loeys B.L."/>
            <person name="Dietz H.C."/>
        </authorList>
    </citation>
    <scope>VARIANTS SGS ARG-21; VAL-32; ASP-34; CYS-34; SER-34; SER-35; 95-ASP--SER-97 DEL; GLU-116 AND ARG-117</scope>
</reference>
<reference key="10">
    <citation type="journal article" date="2014" name="Am. J. Med. Genet. A">
        <title>De novo exon 1 missense mutations of SKI and Shprintzen-Goldberg syndrome: two new cases and a clinical review.</title>
        <authorList>
            <consortium name="FORGE Canada Consortium"/>
            <person name="Au P.Y."/>
            <person name="Racher H.E."/>
            <person name="Graham J.M. Jr."/>
            <person name="Kramer N."/>
            <person name="Lowry R.B."/>
            <person name="Parboosingh J.S."/>
            <person name="Innes A.M."/>
        </authorList>
    </citation>
    <scope>VARIANTS SGS SER-35 AND GLU-116</scope>
</reference>
<reference key="11">
    <citation type="journal article" date="2015" name="Eur. J. Hum. Genet.">
        <title>The SMAD-binding domain of SKI: a hotspot for de novo mutations causing Shprintzen-Goldberg syndrome.</title>
        <authorList>
            <person name="Schepers D."/>
            <person name="Doyle A.J."/>
            <person name="Oswald G."/>
            <person name="Sparks E."/>
            <person name="Myers L."/>
            <person name="Willems P.J."/>
            <person name="Mansour S."/>
            <person name="Simpson M.A."/>
            <person name="Frysira H."/>
            <person name="Maat-Kievit A."/>
            <person name="Van Minkelen R."/>
            <person name="Hoogeboom J.M."/>
            <person name="Mortier G.R."/>
            <person name="Titheradge H."/>
            <person name="Brueton L."/>
            <person name="Starr L."/>
            <person name="Stark Z."/>
            <person name="Ockeloen C."/>
            <person name="Lourenco C.M."/>
            <person name="Blair E."/>
            <person name="Hobson E."/>
            <person name="Hurst J."/>
            <person name="Maystadt I."/>
            <person name="Destree A."/>
            <person name="Girisha K.M."/>
            <person name="Miller M."/>
            <person name="Dietz H.C."/>
            <person name="Loeys B."/>
            <person name="Van Laer L."/>
        </authorList>
    </citation>
    <scope>VARIANTS SGS THR-28; LEU-31; VAL-32; VAL-34; ALA-34; ASP-34; SER-34 AND SER-35</scope>
</reference>
<feature type="chain" id="PRO_0000129382" description="Ski oncogene">
    <location>
        <begin position="1"/>
        <end position="728"/>
    </location>
</feature>
<feature type="region of interest" description="Disordered" evidence="3">
    <location>
        <begin position="321"/>
        <end position="357"/>
    </location>
</feature>
<feature type="region of interest" description="Disordered" evidence="3">
    <location>
        <begin position="452"/>
        <end position="542"/>
    </location>
</feature>
<feature type="coiled-coil region" evidence="2">
    <location>
        <begin position="536"/>
        <end position="710"/>
    </location>
</feature>
<feature type="compositionally biased region" description="Acidic residues" evidence="3">
    <location>
        <begin position="474"/>
        <end position="485"/>
    </location>
</feature>
<feature type="compositionally biased region" description="Low complexity" evidence="3">
    <location>
        <begin position="493"/>
        <end position="509"/>
    </location>
</feature>
<feature type="compositionally biased region" description="Low complexity" evidence="3">
    <location>
        <begin position="518"/>
        <end position="539"/>
    </location>
</feature>
<feature type="modified residue" description="Phosphoserine" evidence="12">
    <location>
        <position position="383"/>
    </location>
</feature>
<feature type="modified residue" description="Phosphoserine" evidence="12">
    <location>
        <position position="432"/>
    </location>
</feature>
<feature type="modified residue" description="Phosphoserine" evidence="11">
    <location>
        <position position="480"/>
    </location>
</feature>
<feature type="modified residue" description="Phosphoserine" evidence="12">
    <location>
        <position position="720"/>
    </location>
</feature>
<feature type="sequence variant" id="VAR_071170" description="In SGS; dbSNP:rs869312902." evidence="6">
    <original>L</original>
    <variation>R</variation>
    <location>
        <position position="21"/>
    </location>
</feature>
<feature type="sequence variant" id="VAR_071659" description="In SGS." evidence="9">
    <original>S</original>
    <variation>T</variation>
    <location>
        <position position="28"/>
    </location>
</feature>
<feature type="sequence variant" id="VAR_071171" description="In SGS." evidence="7 9">
    <original>S</original>
    <variation>L</variation>
    <location>
        <position position="31"/>
    </location>
</feature>
<feature type="sequence variant" id="VAR_071172" description="In SGS." evidence="7">
    <original>L</original>
    <variation>P</variation>
    <location>
        <position position="32"/>
    </location>
</feature>
<feature type="sequence variant" id="VAR_071173" description="In SGS; dbSNP:rs387907304." evidence="6 7 9">
    <original>L</original>
    <variation>V</variation>
    <location>
        <position position="32"/>
    </location>
</feature>
<feature type="sequence variant" id="VAR_071660" description="In SGS." evidence="9">
    <original>G</original>
    <variation>A</variation>
    <location>
        <position position="34"/>
    </location>
</feature>
<feature type="sequence variant" id="VAR_071174" description="In SGS; dbSNP:rs387907306." evidence="6 7">
    <original>G</original>
    <variation>C</variation>
    <location>
        <position position="34"/>
    </location>
</feature>
<feature type="sequence variant" id="VAR_071175" description="In SGS; dbSNP:rs387907305." evidence="6 9">
    <original>G</original>
    <variation>D</variation>
    <location>
        <position position="34"/>
    </location>
</feature>
<feature type="sequence variant" id="VAR_071176" description="In SGS; dbSNP:rs387907306." evidence="6 7 9">
    <original>G</original>
    <variation>S</variation>
    <location>
        <position position="34"/>
    </location>
</feature>
<feature type="sequence variant" id="VAR_071177" description="In SGS; dbSNP:rs387907305." evidence="7 9">
    <original>G</original>
    <variation>V</variation>
    <location>
        <position position="34"/>
    </location>
</feature>
<feature type="sequence variant" id="VAR_071178" description="In SGS; dbSNP:rs397514589." evidence="7">
    <original>P</original>
    <variation>Q</variation>
    <location>
        <position position="35"/>
    </location>
</feature>
<feature type="sequence variant" id="VAR_071179" description="In SGS; dbSNP:rs397514590." evidence="6 7 8 9">
    <original>P</original>
    <variation>S</variation>
    <location>
        <position position="35"/>
    </location>
</feature>
<feature type="sequence variant" id="VAR_071180" description="In SGS." evidence="7">
    <location>
        <begin position="94"/>
        <end position="97"/>
    </location>
</feature>
<feature type="sequence variant" id="VAR_071181" description="In SGS." evidence="6 7">
    <location>
        <begin position="95"/>
        <end position="97"/>
    </location>
</feature>
<feature type="sequence variant" id="VAR_071182" description="In SGS; dbSNP:rs387907303." evidence="6 8">
    <original>G</original>
    <variation>E</variation>
    <location>
        <position position="116"/>
    </location>
</feature>
<feature type="sequence variant" id="VAR_071183" description="In SGS; dbSNP:rs869312901." evidence="6">
    <original>G</original>
    <variation>R</variation>
    <location>
        <position position="117"/>
    </location>
</feature>
<feature type="helix" evidence="15">
    <location>
        <begin position="16"/>
        <end position="27"/>
    </location>
</feature>
<feature type="turn" evidence="15">
    <location>
        <begin position="28"/>
        <end position="30"/>
    </location>
</feature>
<feature type="helix" evidence="16">
    <location>
        <begin position="35"/>
        <end position="39"/>
    </location>
</feature>
<feature type="strand" evidence="14">
    <location>
        <begin position="101"/>
        <end position="105"/>
    </location>
</feature>
<feature type="strand" evidence="14">
    <location>
        <begin position="108"/>
        <end position="115"/>
    </location>
</feature>
<feature type="strand" evidence="14">
    <location>
        <begin position="118"/>
        <end position="122"/>
    </location>
</feature>
<feature type="helix" evidence="14">
    <location>
        <begin position="123"/>
        <end position="127"/>
    </location>
</feature>
<feature type="turn" evidence="14">
    <location>
        <begin position="128"/>
        <end position="133"/>
    </location>
</feature>
<feature type="helix" evidence="14">
    <location>
        <begin position="136"/>
        <end position="145"/>
    </location>
</feature>
<feature type="helix" evidence="14">
    <location>
        <begin position="155"/>
        <end position="163"/>
    </location>
</feature>
<feature type="strand" evidence="14">
    <location>
        <begin position="175"/>
        <end position="178"/>
    </location>
</feature>
<feature type="helix" evidence="14">
    <location>
        <begin position="179"/>
        <end position="190"/>
    </location>
</feature>
<feature type="strand" evidence="13">
    <location>
        <begin position="219"/>
        <end position="222"/>
    </location>
</feature>
<feature type="strand" evidence="13">
    <location>
        <begin position="228"/>
        <end position="232"/>
    </location>
</feature>
<feature type="helix" evidence="13">
    <location>
        <begin position="234"/>
        <end position="236"/>
    </location>
</feature>
<feature type="strand" evidence="13">
    <location>
        <begin position="245"/>
        <end position="247"/>
    </location>
</feature>
<feature type="turn" evidence="13">
    <location>
        <begin position="248"/>
        <end position="250"/>
    </location>
</feature>
<feature type="helix" evidence="13">
    <location>
        <begin position="256"/>
        <end position="259"/>
    </location>
</feature>
<feature type="strand" evidence="13">
    <location>
        <begin position="269"/>
        <end position="275"/>
    </location>
</feature>
<feature type="helix" evidence="13">
    <location>
        <begin position="278"/>
        <end position="280"/>
    </location>
</feature>
<feature type="helix" evidence="13">
    <location>
        <begin position="281"/>
        <end position="284"/>
    </location>
</feature>
<feature type="helix" evidence="13">
    <location>
        <begin position="296"/>
        <end position="310"/>
    </location>
</feature>